<evidence type="ECO:0000250" key="1">
    <source>
        <dbReference type="UniProtKB" id="P11411"/>
    </source>
</evidence>
<evidence type="ECO:0000250" key="2">
    <source>
        <dbReference type="UniProtKB" id="P11413"/>
    </source>
</evidence>
<evidence type="ECO:0000269" key="3">
    <source>
    </source>
</evidence>
<evidence type="ECO:0000305" key="4"/>
<evidence type="ECO:0000312" key="5">
    <source>
        <dbReference type="PomBase" id="SPCC794.01c"/>
    </source>
</evidence>
<name>G6PD2_SCHPO</name>
<sequence>MLSIIVFGASGDLATKMTFPALFALYVRKIIPEDFQIIGYARSKLSQEAANKIVTAHIPIDDTVGASQKALNTFVEHYKYVPGTYDKPESFEMLNSIIAEKETAPASECTRIFYLVLPPHLFAPVSELIKSKAHPNGMVTRLIVEKPIGFDYKSADAILSDLSKHWSAKDTFKVDHFLGEDMIDGFTAIRFANSMFEPIWNREHIESVRVDFREDFGCEGRGGYFEGAGILRDVVQNHLLQLLTLLCIEEPKSQDAEDIIKCKVDFLKSLHPVSKEDIVYGQYTKSANGKVPGYRELDGVADDSEVSTFCALQLRSEAPRWKGIPIIISAGKGLDRDYFEARITFKRREGGMFPTVDSSNVLVLRVYPKEFIALKGHIKQPGFSRQIVPVTLDVKYPEAFPDTWIHKAYEVVIADAINGKHTHFISDDEVRTSWKIFDDVLDTTGDLSPLPYAFGSHHGPDATLEFFKKRNLEWD</sequence>
<keyword id="KW-0119">Carbohydrate metabolism</keyword>
<keyword id="KW-0963">Cytoplasm</keyword>
<keyword id="KW-0313">Glucose metabolism</keyword>
<keyword id="KW-0521">NADP</keyword>
<keyword id="KW-0560">Oxidoreductase</keyword>
<keyword id="KW-1185">Reference proteome</keyword>
<reference key="1">
    <citation type="journal article" date="2002" name="Nature">
        <title>The genome sequence of Schizosaccharomyces pombe.</title>
        <authorList>
            <person name="Wood V."/>
            <person name="Gwilliam R."/>
            <person name="Rajandream M.A."/>
            <person name="Lyne M.H."/>
            <person name="Lyne R."/>
            <person name="Stewart A."/>
            <person name="Sgouros J.G."/>
            <person name="Peat N."/>
            <person name="Hayles J."/>
            <person name="Baker S.G."/>
            <person name="Basham D."/>
            <person name="Bowman S."/>
            <person name="Brooks K."/>
            <person name="Brown D."/>
            <person name="Brown S."/>
            <person name="Chillingworth T."/>
            <person name="Churcher C.M."/>
            <person name="Collins M."/>
            <person name="Connor R."/>
            <person name="Cronin A."/>
            <person name="Davis P."/>
            <person name="Feltwell T."/>
            <person name="Fraser A."/>
            <person name="Gentles S."/>
            <person name="Goble A."/>
            <person name="Hamlin N."/>
            <person name="Harris D.E."/>
            <person name="Hidalgo J."/>
            <person name="Hodgson G."/>
            <person name="Holroyd S."/>
            <person name="Hornsby T."/>
            <person name="Howarth S."/>
            <person name="Huckle E.J."/>
            <person name="Hunt S."/>
            <person name="Jagels K."/>
            <person name="James K.D."/>
            <person name="Jones L."/>
            <person name="Jones M."/>
            <person name="Leather S."/>
            <person name="McDonald S."/>
            <person name="McLean J."/>
            <person name="Mooney P."/>
            <person name="Moule S."/>
            <person name="Mungall K.L."/>
            <person name="Murphy L.D."/>
            <person name="Niblett D."/>
            <person name="Odell C."/>
            <person name="Oliver K."/>
            <person name="O'Neil S."/>
            <person name="Pearson D."/>
            <person name="Quail M.A."/>
            <person name="Rabbinowitsch E."/>
            <person name="Rutherford K.M."/>
            <person name="Rutter S."/>
            <person name="Saunders D."/>
            <person name="Seeger K."/>
            <person name="Sharp S."/>
            <person name="Skelton J."/>
            <person name="Simmonds M.N."/>
            <person name="Squares R."/>
            <person name="Squares S."/>
            <person name="Stevens K."/>
            <person name="Taylor K."/>
            <person name="Taylor R.G."/>
            <person name="Tivey A."/>
            <person name="Walsh S.V."/>
            <person name="Warren T."/>
            <person name="Whitehead S."/>
            <person name="Woodward J.R."/>
            <person name="Volckaert G."/>
            <person name="Aert R."/>
            <person name="Robben J."/>
            <person name="Grymonprez B."/>
            <person name="Weltjens I."/>
            <person name="Vanstreels E."/>
            <person name="Rieger M."/>
            <person name="Schaefer M."/>
            <person name="Mueller-Auer S."/>
            <person name="Gabel C."/>
            <person name="Fuchs M."/>
            <person name="Duesterhoeft A."/>
            <person name="Fritzc C."/>
            <person name="Holzer E."/>
            <person name="Moestl D."/>
            <person name="Hilbert H."/>
            <person name="Borzym K."/>
            <person name="Langer I."/>
            <person name="Beck A."/>
            <person name="Lehrach H."/>
            <person name="Reinhardt R."/>
            <person name="Pohl T.M."/>
            <person name="Eger P."/>
            <person name="Zimmermann W."/>
            <person name="Wedler H."/>
            <person name="Wambutt R."/>
            <person name="Purnelle B."/>
            <person name="Goffeau A."/>
            <person name="Cadieu E."/>
            <person name="Dreano S."/>
            <person name="Gloux S."/>
            <person name="Lelaure V."/>
            <person name="Mottier S."/>
            <person name="Galibert F."/>
            <person name="Aves S.J."/>
            <person name="Xiang Z."/>
            <person name="Hunt C."/>
            <person name="Moore K."/>
            <person name="Hurst S.M."/>
            <person name="Lucas M."/>
            <person name="Rochet M."/>
            <person name="Gaillardin C."/>
            <person name="Tallada V.A."/>
            <person name="Garzon A."/>
            <person name="Thode G."/>
            <person name="Daga R.R."/>
            <person name="Cruzado L."/>
            <person name="Jimenez J."/>
            <person name="Sanchez M."/>
            <person name="del Rey F."/>
            <person name="Benito J."/>
            <person name="Dominguez A."/>
            <person name="Revuelta J.L."/>
            <person name="Moreno S."/>
            <person name="Armstrong J."/>
            <person name="Forsburg S.L."/>
            <person name="Cerutti L."/>
            <person name="Lowe T."/>
            <person name="McCombie W.R."/>
            <person name="Paulsen I."/>
            <person name="Potashkin J."/>
            <person name="Shpakovski G.V."/>
            <person name="Ussery D."/>
            <person name="Barrell B.G."/>
            <person name="Nurse P."/>
        </authorList>
    </citation>
    <scope>NUCLEOTIDE SEQUENCE [LARGE SCALE GENOMIC DNA]</scope>
    <source>
        <strain>972 / ATCC 24843</strain>
    </source>
</reference>
<reference key="2">
    <citation type="journal article" date="2006" name="Nat. Biotechnol.">
        <title>ORFeome cloning and global analysis of protein localization in the fission yeast Schizosaccharomyces pombe.</title>
        <authorList>
            <person name="Matsuyama A."/>
            <person name="Arai R."/>
            <person name="Yashiroda Y."/>
            <person name="Shirai A."/>
            <person name="Kamata A."/>
            <person name="Sekido S."/>
            <person name="Kobayashi Y."/>
            <person name="Hashimoto A."/>
            <person name="Hamamoto M."/>
            <person name="Hiraoka Y."/>
            <person name="Horinouchi S."/>
            <person name="Yoshida M."/>
        </authorList>
    </citation>
    <scope>SUBCELLULAR LOCATION [LARGE SCALE ANALYSIS]</scope>
</reference>
<gene>
    <name evidence="5" type="primary">gcd1</name>
    <name type="synonym">zwf2</name>
    <name type="ORF">SPCC794.01c</name>
</gene>
<organism>
    <name type="scientific">Schizosaccharomyces pombe (strain 972 / ATCC 24843)</name>
    <name type="common">Fission yeast</name>
    <dbReference type="NCBI Taxonomy" id="284812"/>
    <lineage>
        <taxon>Eukaryota</taxon>
        <taxon>Fungi</taxon>
        <taxon>Dikarya</taxon>
        <taxon>Ascomycota</taxon>
        <taxon>Taphrinomycotina</taxon>
        <taxon>Schizosaccharomycetes</taxon>
        <taxon>Schizosaccharomycetales</taxon>
        <taxon>Schizosaccharomycetaceae</taxon>
        <taxon>Schizosaccharomyces</taxon>
    </lineage>
</organism>
<dbReference type="EC" id="1.1.1.49" evidence="2"/>
<dbReference type="EMBL" id="CU329672">
    <property type="protein sequence ID" value="CAA19129.1"/>
    <property type="molecule type" value="Genomic_DNA"/>
</dbReference>
<dbReference type="PIR" id="T41610">
    <property type="entry name" value="T41610"/>
</dbReference>
<dbReference type="RefSeq" id="NP_587749.1">
    <property type="nucleotide sequence ID" value="NM_001022743.2"/>
</dbReference>
<dbReference type="SMR" id="O59812"/>
<dbReference type="BioGRID" id="276136">
    <property type="interactions" value="28"/>
</dbReference>
<dbReference type="FunCoup" id="O59812">
    <property type="interactions" value="477"/>
</dbReference>
<dbReference type="STRING" id="284812.O59812"/>
<dbReference type="PaxDb" id="4896-SPCC794.01c.1"/>
<dbReference type="EnsemblFungi" id="SPCC794.01c.1">
    <property type="protein sequence ID" value="SPCC794.01c.1:pep"/>
    <property type="gene ID" value="SPCC794.01c"/>
</dbReference>
<dbReference type="PomBase" id="SPCC794.01c">
    <property type="gene designation" value="gcd1"/>
</dbReference>
<dbReference type="VEuPathDB" id="FungiDB:SPCC794.01c"/>
<dbReference type="eggNOG" id="KOG0563">
    <property type="taxonomic scope" value="Eukaryota"/>
</dbReference>
<dbReference type="HOGENOM" id="CLU_013524_2_0_1"/>
<dbReference type="InParanoid" id="O59812"/>
<dbReference type="OMA" id="FEARITF"/>
<dbReference type="PhylomeDB" id="O59812"/>
<dbReference type="UniPathway" id="UPA00115">
    <property type="reaction ID" value="UER00408"/>
</dbReference>
<dbReference type="PRO" id="PR:O59812"/>
<dbReference type="Proteomes" id="UP000002485">
    <property type="component" value="Chromosome III"/>
</dbReference>
<dbReference type="GO" id="GO:0005829">
    <property type="term" value="C:cytosol"/>
    <property type="evidence" value="ECO:0007005"/>
    <property type="project" value="PomBase"/>
</dbReference>
<dbReference type="GO" id="GO:0047935">
    <property type="term" value="F:glucose 1-dehydrogenase (NADP+) activity"/>
    <property type="evidence" value="ECO:0000314"/>
    <property type="project" value="PomBase"/>
</dbReference>
<dbReference type="GO" id="GO:0004345">
    <property type="term" value="F:glucose-6-phosphate dehydrogenase activity"/>
    <property type="evidence" value="ECO:0000318"/>
    <property type="project" value="GO_Central"/>
</dbReference>
<dbReference type="GO" id="GO:0050661">
    <property type="term" value="F:NADP binding"/>
    <property type="evidence" value="ECO:0007669"/>
    <property type="project" value="InterPro"/>
</dbReference>
<dbReference type="GO" id="GO:0006006">
    <property type="term" value="P:glucose metabolic process"/>
    <property type="evidence" value="ECO:0000318"/>
    <property type="project" value="GO_Central"/>
</dbReference>
<dbReference type="GO" id="GO:0009051">
    <property type="term" value="P:pentose-phosphate shunt, oxidative branch"/>
    <property type="evidence" value="ECO:0000318"/>
    <property type="project" value="GO_Central"/>
</dbReference>
<dbReference type="FunFam" id="3.40.50.720:FF:000079">
    <property type="entry name" value="Glucose-6-phosphate 1-dehydrogenase"/>
    <property type="match status" value="1"/>
</dbReference>
<dbReference type="Gene3D" id="3.30.360.10">
    <property type="entry name" value="Dihydrodipicolinate Reductase, domain 2"/>
    <property type="match status" value="1"/>
</dbReference>
<dbReference type="Gene3D" id="3.40.50.720">
    <property type="entry name" value="NAD(P)-binding Rossmann-like Domain"/>
    <property type="match status" value="1"/>
</dbReference>
<dbReference type="HAMAP" id="MF_00966">
    <property type="entry name" value="G6PD"/>
    <property type="match status" value="1"/>
</dbReference>
<dbReference type="InterPro" id="IPR001282">
    <property type="entry name" value="G6P_DH"/>
</dbReference>
<dbReference type="InterPro" id="IPR022675">
    <property type="entry name" value="G6P_DH_C"/>
</dbReference>
<dbReference type="InterPro" id="IPR022674">
    <property type="entry name" value="G6P_DH_NAD-bd"/>
</dbReference>
<dbReference type="InterPro" id="IPR036291">
    <property type="entry name" value="NAD(P)-bd_dom_sf"/>
</dbReference>
<dbReference type="NCBIfam" id="TIGR00871">
    <property type="entry name" value="zwf"/>
    <property type="match status" value="1"/>
</dbReference>
<dbReference type="PANTHER" id="PTHR23429">
    <property type="entry name" value="GLUCOSE-6-PHOSPHATE 1-DEHYDROGENASE G6PD"/>
    <property type="match status" value="1"/>
</dbReference>
<dbReference type="PANTHER" id="PTHR23429:SF19">
    <property type="entry name" value="GLUCOSE-6-PHOSPHATE 1-DEHYDROGENASE GCD1"/>
    <property type="match status" value="1"/>
</dbReference>
<dbReference type="Pfam" id="PF02781">
    <property type="entry name" value="G6PD_C"/>
    <property type="match status" value="1"/>
</dbReference>
<dbReference type="Pfam" id="PF00479">
    <property type="entry name" value="G6PD_N"/>
    <property type="match status" value="1"/>
</dbReference>
<dbReference type="PIRSF" id="PIRSF000110">
    <property type="entry name" value="G6PD"/>
    <property type="match status" value="1"/>
</dbReference>
<dbReference type="PRINTS" id="PR00079">
    <property type="entry name" value="G6PDHDRGNASE"/>
</dbReference>
<dbReference type="SUPFAM" id="SSF55347">
    <property type="entry name" value="Glyceraldehyde-3-phosphate dehydrogenase-like, C-terminal domain"/>
    <property type="match status" value="1"/>
</dbReference>
<dbReference type="SUPFAM" id="SSF51735">
    <property type="entry name" value="NAD(P)-binding Rossmann-fold domains"/>
    <property type="match status" value="1"/>
</dbReference>
<accession>O59812</accession>
<proteinExistence type="inferred from homology"/>
<comment type="function">
    <text evidence="2">Catalyzes the rate-limiting step of the oxidative pentose-phosphate pathway, which represents a route for the dissimilation of carbohydrates besides glycolysis. The main function of this enzyme is to provide reducing power (NADPH) and pentose phosphates for fatty acid and nucleic acid synthesis (By similarity).</text>
</comment>
<comment type="catalytic activity">
    <reaction evidence="2">
        <text>D-glucose 6-phosphate + NADP(+) = 6-phospho-D-glucono-1,5-lactone + NADPH + H(+)</text>
        <dbReference type="Rhea" id="RHEA:15841"/>
        <dbReference type="ChEBI" id="CHEBI:15378"/>
        <dbReference type="ChEBI" id="CHEBI:57783"/>
        <dbReference type="ChEBI" id="CHEBI:57955"/>
        <dbReference type="ChEBI" id="CHEBI:58349"/>
        <dbReference type="ChEBI" id="CHEBI:61548"/>
        <dbReference type="EC" id="1.1.1.49"/>
    </reaction>
</comment>
<comment type="pathway">
    <text evidence="4">Carbohydrate degradation; pentose phosphate pathway; D-ribulose 5-phosphate from D-glucose 6-phosphate (oxidative stage): step 1/3.</text>
</comment>
<comment type="subcellular location">
    <subcellularLocation>
        <location evidence="3">Cytoplasm</location>
    </subcellularLocation>
</comment>
<comment type="similarity">
    <text evidence="4">Belongs to the glucose-6-phosphate dehydrogenase family.</text>
</comment>
<feature type="chain" id="PRO_0000337687" description="Glucose-6-phosphate 1-dehydrogenase gcd1">
    <location>
        <begin position="1"/>
        <end position="475"/>
    </location>
</feature>
<feature type="active site" description="Proton acceptor" evidence="1">
    <location>
        <position position="238"/>
    </location>
</feature>
<feature type="binding site" evidence="2">
    <location>
        <position position="42"/>
    </location>
    <ligand>
        <name>NADP(+)</name>
        <dbReference type="ChEBI" id="CHEBI:58349"/>
        <label>1</label>
    </ligand>
</feature>
<feature type="binding site" evidence="2">
    <location>
        <position position="146"/>
    </location>
    <ligand>
        <name>D-glucose 6-phosphate</name>
        <dbReference type="ChEBI" id="CHEBI:61548"/>
    </ligand>
</feature>
<feature type="binding site" evidence="2">
    <location>
        <position position="146"/>
    </location>
    <ligand>
        <name>NADP(+)</name>
        <dbReference type="ChEBI" id="CHEBI:58349"/>
        <label>1</label>
    </ligand>
</feature>
<feature type="binding site" evidence="2">
    <location>
        <position position="214"/>
    </location>
    <ligand>
        <name>D-glucose 6-phosphate</name>
        <dbReference type="ChEBI" id="CHEBI:61548"/>
    </ligand>
</feature>
<feature type="binding site" evidence="2">
    <location>
        <position position="233"/>
    </location>
    <ligand>
        <name>D-glucose 6-phosphate</name>
        <dbReference type="ChEBI" id="CHEBI:61548"/>
    </ligand>
</feature>
<feature type="binding site" evidence="2">
    <location>
        <position position="332"/>
    </location>
    <ligand>
        <name>D-glucose 6-phosphate</name>
        <dbReference type="ChEBI" id="CHEBI:61548"/>
    </ligand>
</feature>
<feature type="binding site" evidence="2">
    <location>
        <position position="342"/>
    </location>
    <ligand>
        <name>NADP(+)</name>
        <dbReference type="ChEBI" id="CHEBI:58349"/>
        <label>2</label>
    </ligand>
</feature>
<feature type="binding site" evidence="2">
    <location>
        <position position="365"/>
    </location>
    <ligand>
        <name>NADP(+)</name>
        <dbReference type="ChEBI" id="CHEBI:58349"/>
        <label>2</label>
    </ligand>
</feature>
<protein>
    <recommendedName>
        <fullName>Glucose-6-phosphate 1-dehydrogenase gcd1</fullName>
        <shortName>G6PD</shortName>
        <ecNumber evidence="2">1.1.1.49</ecNumber>
    </recommendedName>
</protein>